<gene>
    <name evidence="1" type="primary">rsmG</name>
    <name type="ordered locus">Bpet4976</name>
</gene>
<evidence type="ECO:0000255" key="1">
    <source>
        <dbReference type="HAMAP-Rule" id="MF_00074"/>
    </source>
</evidence>
<evidence type="ECO:0000256" key="2">
    <source>
        <dbReference type="SAM" id="MobiDB-lite"/>
    </source>
</evidence>
<evidence type="ECO:0000305" key="3"/>
<dbReference type="EC" id="2.1.1.170" evidence="1"/>
<dbReference type="EMBL" id="AM902716">
    <property type="protein sequence ID" value="CAP45328.1"/>
    <property type="status" value="ALT_INIT"/>
    <property type="molecule type" value="Genomic_DNA"/>
</dbReference>
<dbReference type="SMR" id="A9IJ46"/>
<dbReference type="STRING" id="94624.Bpet4976"/>
<dbReference type="KEGG" id="bpt:Bpet4976"/>
<dbReference type="eggNOG" id="COG0357">
    <property type="taxonomic scope" value="Bacteria"/>
</dbReference>
<dbReference type="Proteomes" id="UP000001225">
    <property type="component" value="Chromosome"/>
</dbReference>
<dbReference type="GO" id="GO:0005829">
    <property type="term" value="C:cytosol"/>
    <property type="evidence" value="ECO:0007669"/>
    <property type="project" value="TreeGrafter"/>
</dbReference>
<dbReference type="GO" id="GO:0070043">
    <property type="term" value="F:rRNA (guanine-N7-)-methyltransferase activity"/>
    <property type="evidence" value="ECO:0007669"/>
    <property type="project" value="UniProtKB-UniRule"/>
</dbReference>
<dbReference type="CDD" id="cd02440">
    <property type="entry name" value="AdoMet_MTases"/>
    <property type="match status" value="1"/>
</dbReference>
<dbReference type="Gene3D" id="3.40.50.150">
    <property type="entry name" value="Vaccinia Virus protein VP39"/>
    <property type="match status" value="1"/>
</dbReference>
<dbReference type="HAMAP" id="MF_00074">
    <property type="entry name" value="16SrRNA_methyltr_G"/>
    <property type="match status" value="1"/>
</dbReference>
<dbReference type="InterPro" id="IPR003682">
    <property type="entry name" value="rRNA_ssu_MeTfrase_G"/>
</dbReference>
<dbReference type="InterPro" id="IPR029063">
    <property type="entry name" value="SAM-dependent_MTases_sf"/>
</dbReference>
<dbReference type="NCBIfam" id="TIGR00138">
    <property type="entry name" value="rsmG_gidB"/>
    <property type="match status" value="1"/>
</dbReference>
<dbReference type="PANTHER" id="PTHR31760">
    <property type="entry name" value="S-ADENOSYL-L-METHIONINE-DEPENDENT METHYLTRANSFERASES SUPERFAMILY PROTEIN"/>
    <property type="match status" value="1"/>
</dbReference>
<dbReference type="PANTHER" id="PTHR31760:SF0">
    <property type="entry name" value="S-ADENOSYL-L-METHIONINE-DEPENDENT METHYLTRANSFERASES SUPERFAMILY PROTEIN"/>
    <property type="match status" value="1"/>
</dbReference>
<dbReference type="Pfam" id="PF02527">
    <property type="entry name" value="GidB"/>
    <property type="match status" value="1"/>
</dbReference>
<dbReference type="PIRSF" id="PIRSF003078">
    <property type="entry name" value="GidB"/>
    <property type="match status" value="1"/>
</dbReference>
<dbReference type="SUPFAM" id="SSF53335">
    <property type="entry name" value="S-adenosyl-L-methionine-dependent methyltransferases"/>
    <property type="match status" value="1"/>
</dbReference>
<keyword id="KW-0963">Cytoplasm</keyword>
<keyword id="KW-0489">Methyltransferase</keyword>
<keyword id="KW-0698">rRNA processing</keyword>
<keyword id="KW-0949">S-adenosyl-L-methionine</keyword>
<keyword id="KW-0808">Transferase</keyword>
<accession>A9IJ46</accession>
<protein>
    <recommendedName>
        <fullName evidence="1">Ribosomal RNA small subunit methyltransferase G</fullName>
        <ecNumber evidence="1">2.1.1.170</ecNumber>
    </recommendedName>
    <alternativeName>
        <fullName evidence="1">16S rRNA 7-methylguanosine methyltransferase</fullName>
        <shortName evidence="1">16S rRNA m7G methyltransferase</shortName>
    </alternativeName>
</protein>
<proteinExistence type="inferred from homology"/>
<sequence length="255" mass="27577">MSSPGRPKGEYRSAQHAGAVAGPPGRPDGEHRGSSGADPNGRLRQACDSLGLRVEAAQADKLLAYLAQMQRWNRTYNLTAIRDPEQMLVQHLFDSLSVVDPLSRVVGADTAATVYDIGSGGGLPGVVLAIMRPTWQIGCVDAVEKKMAFVRQMSGVLALPNLRALHARVEELPPAGCDVVISRAFASLNDFASLAGRHVRNDGTLVAMKGKVPEDEIQTLHQQGEWQVQEIQALQVPALDAQRCLIWMRRSQGTL</sequence>
<name>RSMG_BORPD</name>
<reference key="1">
    <citation type="journal article" date="2008" name="BMC Genomics">
        <title>The missing link: Bordetella petrii is endowed with both the metabolic versatility of environmental bacteria and virulence traits of pathogenic Bordetellae.</title>
        <authorList>
            <person name="Gross R."/>
            <person name="Guzman C.A."/>
            <person name="Sebaihia M."/>
            <person name="Martin dos Santos V.A.P."/>
            <person name="Pieper D.H."/>
            <person name="Koebnik R."/>
            <person name="Lechner M."/>
            <person name="Bartels D."/>
            <person name="Buhrmester J."/>
            <person name="Choudhuri J.V."/>
            <person name="Ebensen T."/>
            <person name="Gaigalat L."/>
            <person name="Herrmann S."/>
            <person name="Khachane A.N."/>
            <person name="Larisch C."/>
            <person name="Link S."/>
            <person name="Linke B."/>
            <person name="Meyer F."/>
            <person name="Mormann S."/>
            <person name="Nakunst D."/>
            <person name="Rueckert C."/>
            <person name="Schneiker-Bekel S."/>
            <person name="Schulze K."/>
            <person name="Voerholter F.-J."/>
            <person name="Yevsa T."/>
            <person name="Engle J.T."/>
            <person name="Goldman W.E."/>
            <person name="Puehler A."/>
            <person name="Goebel U.B."/>
            <person name="Goesmann A."/>
            <person name="Bloecker H."/>
            <person name="Kaiser O."/>
            <person name="Martinez-Arias R."/>
        </authorList>
    </citation>
    <scope>NUCLEOTIDE SEQUENCE [LARGE SCALE GENOMIC DNA]</scope>
    <source>
        <strain>ATCC BAA-461 / DSM 12804 / CCUG 43448</strain>
    </source>
</reference>
<feature type="chain" id="PRO_0000342905" description="Ribosomal RNA small subunit methyltransferase G">
    <location>
        <begin position="1"/>
        <end position="255"/>
    </location>
</feature>
<feature type="region of interest" description="Disordered" evidence="2">
    <location>
        <begin position="1"/>
        <end position="44"/>
    </location>
</feature>
<feature type="binding site" evidence="1">
    <location>
        <position position="118"/>
    </location>
    <ligand>
        <name>S-adenosyl-L-methionine</name>
        <dbReference type="ChEBI" id="CHEBI:59789"/>
    </ligand>
</feature>
<feature type="binding site" evidence="1">
    <location>
        <position position="123"/>
    </location>
    <ligand>
        <name>S-adenosyl-L-methionine</name>
        <dbReference type="ChEBI" id="CHEBI:59789"/>
    </ligand>
</feature>
<feature type="binding site" evidence="1">
    <location>
        <begin position="169"/>
        <end position="170"/>
    </location>
    <ligand>
        <name>S-adenosyl-L-methionine</name>
        <dbReference type="ChEBI" id="CHEBI:59789"/>
    </ligand>
</feature>
<feature type="binding site" evidence="1">
    <location>
        <position position="183"/>
    </location>
    <ligand>
        <name>S-adenosyl-L-methionine</name>
        <dbReference type="ChEBI" id="CHEBI:59789"/>
    </ligand>
</feature>
<comment type="function">
    <text evidence="1">Specifically methylates the N7 position of guanine in position 527 of 16S rRNA.</text>
</comment>
<comment type="catalytic activity">
    <reaction evidence="1">
        <text>guanosine(527) in 16S rRNA + S-adenosyl-L-methionine = N(7)-methylguanosine(527) in 16S rRNA + S-adenosyl-L-homocysteine</text>
        <dbReference type="Rhea" id="RHEA:42732"/>
        <dbReference type="Rhea" id="RHEA-COMP:10209"/>
        <dbReference type="Rhea" id="RHEA-COMP:10210"/>
        <dbReference type="ChEBI" id="CHEBI:57856"/>
        <dbReference type="ChEBI" id="CHEBI:59789"/>
        <dbReference type="ChEBI" id="CHEBI:74269"/>
        <dbReference type="ChEBI" id="CHEBI:74480"/>
        <dbReference type="EC" id="2.1.1.170"/>
    </reaction>
</comment>
<comment type="subcellular location">
    <subcellularLocation>
        <location evidence="1">Cytoplasm</location>
    </subcellularLocation>
</comment>
<comment type="similarity">
    <text evidence="1">Belongs to the methyltransferase superfamily. RNA methyltransferase RsmG family.</text>
</comment>
<comment type="sequence caution" evidence="3">
    <conflict type="erroneous initiation">
        <sequence resource="EMBL-CDS" id="CAP45328"/>
    </conflict>
</comment>
<organism>
    <name type="scientific">Bordetella petrii (strain ATCC BAA-461 / DSM 12804 / CCUG 43448)</name>
    <dbReference type="NCBI Taxonomy" id="340100"/>
    <lineage>
        <taxon>Bacteria</taxon>
        <taxon>Pseudomonadati</taxon>
        <taxon>Pseudomonadota</taxon>
        <taxon>Betaproteobacteria</taxon>
        <taxon>Burkholderiales</taxon>
        <taxon>Alcaligenaceae</taxon>
        <taxon>Bordetella</taxon>
    </lineage>
</organism>